<protein>
    <recommendedName>
        <fullName evidence="1">L-rhamnose mutarotase</fullName>
        <ecNumber evidence="1">5.1.3.32</ecNumber>
    </recommendedName>
    <alternativeName>
        <fullName evidence="1">Rhamnose 1-epimerase</fullName>
    </alternativeName>
    <alternativeName>
        <fullName evidence="1">Type-3 mutarotase</fullName>
    </alternativeName>
</protein>
<organism>
    <name type="scientific">Shigella boydii serotype 4 (strain Sb227)</name>
    <dbReference type="NCBI Taxonomy" id="300268"/>
    <lineage>
        <taxon>Bacteria</taxon>
        <taxon>Pseudomonadati</taxon>
        <taxon>Pseudomonadota</taxon>
        <taxon>Gammaproteobacteria</taxon>
        <taxon>Enterobacterales</taxon>
        <taxon>Enterobacteriaceae</taxon>
        <taxon>Shigella</taxon>
    </lineage>
</organism>
<evidence type="ECO:0000255" key="1">
    <source>
        <dbReference type="HAMAP-Rule" id="MF_01663"/>
    </source>
</evidence>
<gene>
    <name evidence="1" type="primary">rhaM</name>
    <name type="ordered locus">SBO_3919</name>
</gene>
<name>RHAM_SHIBS</name>
<keyword id="KW-0119">Carbohydrate metabolism</keyword>
<keyword id="KW-0963">Cytoplasm</keyword>
<keyword id="KW-0413">Isomerase</keyword>
<keyword id="KW-0684">Rhamnose metabolism</keyword>
<comment type="function">
    <text evidence="1">Involved in the anomeric conversion of L-rhamnose.</text>
</comment>
<comment type="catalytic activity">
    <reaction evidence="1">
        <text>alpha-L-rhamnose = beta-L-rhamnose</text>
        <dbReference type="Rhea" id="RHEA:25584"/>
        <dbReference type="ChEBI" id="CHEBI:27586"/>
        <dbReference type="ChEBI" id="CHEBI:27907"/>
        <dbReference type="EC" id="5.1.3.32"/>
    </reaction>
</comment>
<comment type="pathway">
    <text evidence="1">Carbohydrate metabolism; L-rhamnose metabolism.</text>
</comment>
<comment type="subunit">
    <text evidence="1">Homodimer.</text>
</comment>
<comment type="subcellular location">
    <subcellularLocation>
        <location evidence="1">Cytoplasm</location>
    </subcellularLocation>
</comment>
<comment type="similarity">
    <text evidence="1">Belongs to the rhamnose mutarotase family.</text>
</comment>
<reference key="1">
    <citation type="journal article" date="2005" name="Nucleic Acids Res.">
        <title>Genome dynamics and diversity of Shigella species, the etiologic agents of bacillary dysentery.</title>
        <authorList>
            <person name="Yang F."/>
            <person name="Yang J."/>
            <person name="Zhang X."/>
            <person name="Chen L."/>
            <person name="Jiang Y."/>
            <person name="Yan Y."/>
            <person name="Tang X."/>
            <person name="Wang J."/>
            <person name="Xiong Z."/>
            <person name="Dong J."/>
            <person name="Xue Y."/>
            <person name="Zhu Y."/>
            <person name="Xu X."/>
            <person name="Sun L."/>
            <person name="Chen S."/>
            <person name="Nie H."/>
            <person name="Peng J."/>
            <person name="Xu J."/>
            <person name="Wang Y."/>
            <person name="Yuan Z."/>
            <person name="Wen Y."/>
            <person name="Yao Z."/>
            <person name="Shen Y."/>
            <person name="Qiang B."/>
            <person name="Hou Y."/>
            <person name="Yu J."/>
            <person name="Jin Q."/>
        </authorList>
    </citation>
    <scope>NUCLEOTIDE SEQUENCE [LARGE SCALE GENOMIC DNA]</scope>
    <source>
        <strain>Sb227</strain>
    </source>
</reference>
<feature type="chain" id="PRO_0000344604" description="L-rhamnose mutarotase">
    <location>
        <begin position="1"/>
        <end position="99"/>
    </location>
</feature>
<feature type="active site" description="Proton donor" evidence="1">
    <location>
        <position position="22"/>
    </location>
</feature>
<feature type="binding site" evidence="1">
    <location>
        <position position="18"/>
    </location>
    <ligand>
        <name>substrate</name>
    </ligand>
</feature>
<feature type="binding site" evidence="1">
    <location>
        <position position="41"/>
    </location>
    <ligand>
        <name>substrate</name>
    </ligand>
</feature>
<feature type="binding site" evidence="1">
    <location>
        <begin position="76"/>
        <end position="77"/>
    </location>
    <ligand>
        <name>substrate</name>
    </ligand>
</feature>
<proteinExistence type="inferred from homology"/>
<dbReference type="EC" id="5.1.3.32" evidence="1"/>
<dbReference type="EMBL" id="CP000036">
    <property type="protein sequence ID" value="ABB68370.1"/>
    <property type="molecule type" value="Genomic_DNA"/>
</dbReference>
<dbReference type="RefSeq" id="WP_000619504.1">
    <property type="nucleotide sequence ID" value="NC_007613.1"/>
</dbReference>
<dbReference type="SMR" id="Q31U88"/>
<dbReference type="KEGG" id="sbo:SBO_3919"/>
<dbReference type="HOGENOM" id="CLU_100689_2_0_6"/>
<dbReference type="UniPathway" id="UPA00125"/>
<dbReference type="Proteomes" id="UP000007067">
    <property type="component" value="Chromosome"/>
</dbReference>
<dbReference type="GO" id="GO:0005737">
    <property type="term" value="C:cytoplasm"/>
    <property type="evidence" value="ECO:0007669"/>
    <property type="project" value="UniProtKB-SubCell"/>
</dbReference>
<dbReference type="GO" id="GO:0062192">
    <property type="term" value="F:L-rhamnose mutarotase activity"/>
    <property type="evidence" value="ECO:0007669"/>
    <property type="project" value="UniProtKB-EC"/>
</dbReference>
<dbReference type="GO" id="GO:0019301">
    <property type="term" value="P:rhamnose catabolic process"/>
    <property type="evidence" value="ECO:0007669"/>
    <property type="project" value="TreeGrafter"/>
</dbReference>
<dbReference type="FunFam" id="3.30.70.100:FF:000013">
    <property type="entry name" value="L-rhamnose mutarotase"/>
    <property type="match status" value="1"/>
</dbReference>
<dbReference type="Gene3D" id="3.30.70.100">
    <property type="match status" value="1"/>
</dbReference>
<dbReference type="HAMAP" id="MF_01663">
    <property type="entry name" value="L_rham_rotase"/>
    <property type="match status" value="1"/>
</dbReference>
<dbReference type="InterPro" id="IPR011008">
    <property type="entry name" value="Dimeric_a/b-barrel"/>
</dbReference>
<dbReference type="InterPro" id="IPR013448">
    <property type="entry name" value="L-rhamnose_mutarotase"/>
</dbReference>
<dbReference type="InterPro" id="IPR008000">
    <property type="entry name" value="Rham/fucose_mutarotase"/>
</dbReference>
<dbReference type="NCBIfam" id="TIGR02625">
    <property type="entry name" value="YiiL_rotase"/>
    <property type="match status" value="1"/>
</dbReference>
<dbReference type="PANTHER" id="PTHR34389">
    <property type="entry name" value="L-RHAMNOSE MUTAROTASE"/>
    <property type="match status" value="1"/>
</dbReference>
<dbReference type="PANTHER" id="PTHR34389:SF2">
    <property type="entry name" value="L-RHAMNOSE MUTAROTASE"/>
    <property type="match status" value="1"/>
</dbReference>
<dbReference type="Pfam" id="PF05336">
    <property type="entry name" value="rhaM"/>
    <property type="match status" value="1"/>
</dbReference>
<dbReference type="SUPFAM" id="SSF54909">
    <property type="entry name" value="Dimeric alpha+beta barrel"/>
    <property type="match status" value="1"/>
</dbReference>
<sequence length="99" mass="11543">MIRKAFVMQVNPDAHEEYQRRHNPIWPELEAVLKSHGAHNYAIYLDKARNLLFATVEIESEERWNAVASTDVCQRWWKYMTDVMPANPDNSPVSSELQG</sequence>
<accession>Q31U88</accession>